<accession>A9BUK7</accession>
<comment type="function">
    <text evidence="1">Cell wall formation.</text>
</comment>
<comment type="catalytic activity">
    <reaction evidence="1">
        <text>UDP-N-acetyl-alpha-D-muramate + L-alanine + ATP = UDP-N-acetyl-alpha-D-muramoyl-L-alanine + ADP + phosphate + H(+)</text>
        <dbReference type="Rhea" id="RHEA:23372"/>
        <dbReference type="ChEBI" id="CHEBI:15378"/>
        <dbReference type="ChEBI" id="CHEBI:30616"/>
        <dbReference type="ChEBI" id="CHEBI:43474"/>
        <dbReference type="ChEBI" id="CHEBI:57972"/>
        <dbReference type="ChEBI" id="CHEBI:70757"/>
        <dbReference type="ChEBI" id="CHEBI:83898"/>
        <dbReference type="ChEBI" id="CHEBI:456216"/>
        <dbReference type="EC" id="6.3.2.8"/>
    </reaction>
</comment>
<comment type="pathway">
    <text evidence="1">Cell wall biogenesis; peptidoglycan biosynthesis.</text>
</comment>
<comment type="subcellular location">
    <subcellularLocation>
        <location evidence="1">Cytoplasm</location>
    </subcellularLocation>
</comment>
<comment type="similarity">
    <text evidence="1">Belongs to the MurCDEF family.</text>
</comment>
<reference key="1">
    <citation type="submission" date="2007-11" db="EMBL/GenBank/DDBJ databases">
        <title>Complete sequence of Delftia acidovorans DSM 14801 / SPH-1.</title>
        <authorList>
            <person name="Copeland A."/>
            <person name="Lucas S."/>
            <person name="Lapidus A."/>
            <person name="Barry K."/>
            <person name="Glavina del Rio T."/>
            <person name="Dalin E."/>
            <person name="Tice H."/>
            <person name="Pitluck S."/>
            <person name="Lowry S."/>
            <person name="Clum A."/>
            <person name="Schmutz J."/>
            <person name="Larimer F."/>
            <person name="Land M."/>
            <person name="Hauser L."/>
            <person name="Kyrpides N."/>
            <person name="Kim E."/>
            <person name="Schleheck D."/>
            <person name="Richardson P."/>
        </authorList>
    </citation>
    <scope>NUCLEOTIDE SEQUENCE [LARGE SCALE GENOMIC DNA]</scope>
    <source>
        <strain>DSM 14801 / SPH-1</strain>
    </source>
</reference>
<evidence type="ECO:0000255" key="1">
    <source>
        <dbReference type="HAMAP-Rule" id="MF_00046"/>
    </source>
</evidence>
<organism>
    <name type="scientific">Delftia acidovorans (strain DSM 14801 / SPH-1)</name>
    <dbReference type="NCBI Taxonomy" id="398578"/>
    <lineage>
        <taxon>Bacteria</taxon>
        <taxon>Pseudomonadati</taxon>
        <taxon>Pseudomonadota</taxon>
        <taxon>Betaproteobacteria</taxon>
        <taxon>Burkholderiales</taxon>
        <taxon>Comamonadaceae</taxon>
        <taxon>Delftia</taxon>
    </lineage>
</organism>
<protein>
    <recommendedName>
        <fullName evidence="1">UDP-N-acetylmuramate--L-alanine ligase</fullName>
        <ecNumber evidence="1">6.3.2.8</ecNumber>
    </recommendedName>
    <alternativeName>
        <fullName evidence="1">UDP-N-acetylmuramoyl-L-alanine synthetase</fullName>
    </alternativeName>
</protein>
<keyword id="KW-0067">ATP-binding</keyword>
<keyword id="KW-0131">Cell cycle</keyword>
<keyword id="KW-0132">Cell division</keyword>
<keyword id="KW-0133">Cell shape</keyword>
<keyword id="KW-0961">Cell wall biogenesis/degradation</keyword>
<keyword id="KW-0963">Cytoplasm</keyword>
<keyword id="KW-0436">Ligase</keyword>
<keyword id="KW-0547">Nucleotide-binding</keyword>
<keyword id="KW-0573">Peptidoglycan synthesis</keyword>
<keyword id="KW-1185">Reference proteome</keyword>
<gene>
    <name evidence="1" type="primary">murC</name>
    <name type="ordered locus">Daci_1471</name>
</gene>
<name>MURC_DELAS</name>
<sequence length="477" mass="50339">MKHAIHHIHFVGIGGAGMSGIAEVLHNLGYAISGSDLSDSATLRRLAGLGIATHVGHAAAHIEGADAVVTSTAVQSDNPEVLAARERKIPVVPRALMLAELMRFKQGIAIAGAHGKTTTTSLVTSVLAEAGLDPTFVIGGKLNSAGANAKLGQGDYIVVEADESDASFLNLLPVMAVVTNIDADHMETYGHDFGRLKGAFVDFLHRMPFYGRAIVCVDSPAVREILPQVARPVTTYGFAEDAQVRALNVRAEAGSMHFTVRRSNGQSYPDLDVVLSLPGEHNVLNALSAVAVAMELEISDDALLRAFESFKGVGRRFQRYGELAAADGGSFTVIDDYGHHPVEMAATLAAARGAFPGRRLVLAFQPHRYSRTRDCFEDFVKVIGLADAVLLTEVYAAGEAPVVAADGRSLARALRVAGRVEPVFVENVAELPAAIAVNARDGDVLLCMGAGSIGAVPGKLVEMLQKQELQAQQGAAQ</sequence>
<dbReference type="EC" id="6.3.2.8" evidence="1"/>
<dbReference type="EMBL" id="CP000884">
    <property type="protein sequence ID" value="ABX34115.1"/>
    <property type="molecule type" value="Genomic_DNA"/>
</dbReference>
<dbReference type="RefSeq" id="WP_012203401.1">
    <property type="nucleotide sequence ID" value="NC_010002.1"/>
</dbReference>
<dbReference type="SMR" id="A9BUK7"/>
<dbReference type="STRING" id="398578.Daci_1471"/>
<dbReference type="GeneID" id="24119085"/>
<dbReference type="KEGG" id="dac:Daci_1471"/>
<dbReference type="eggNOG" id="COG0773">
    <property type="taxonomic scope" value="Bacteria"/>
</dbReference>
<dbReference type="HOGENOM" id="CLU_028104_2_2_4"/>
<dbReference type="UniPathway" id="UPA00219"/>
<dbReference type="Proteomes" id="UP000000784">
    <property type="component" value="Chromosome"/>
</dbReference>
<dbReference type="GO" id="GO:0005737">
    <property type="term" value="C:cytoplasm"/>
    <property type="evidence" value="ECO:0007669"/>
    <property type="project" value="UniProtKB-SubCell"/>
</dbReference>
<dbReference type="GO" id="GO:0005524">
    <property type="term" value="F:ATP binding"/>
    <property type="evidence" value="ECO:0007669"/>
    <property type="project" value="UniProtKB-UniRule"/>
</dbReference>
<dbReference type="GO" id="GO:0008763">
    <property type="term" value="F:UDP-N-acetylmuramate-L-alanine ligase activity"/>
    <property type="evidence" value="ECO:0007669"/>
    <property type="project" value="UniProtKB-UniRule"/>
</dbReference>
<dbReference type="GO" id="GO:0051301">
    <property type="term" value="P:cell division"/>
    <property type="evidence" value="ECO:0007669"/>
    <property type="project" value="UniProtKB-KW"/>
</dbReference>
<dbReference type="GO" id="GO:0071555">
    <property type="term" value="P:cell wall organization"/>
    <property type="evidence" value="ECO:0007669"/>
    <property type="project" value="UniProtKB-KW"/>
</dbReference>
<dbReference type="GO" id="GO:0009252">
    <property type="term" value="P:peptidoglycan biosynthetic process"/>
    <property type="evidence" value="ECO:0007669"/>
    <property type="project" value="UniProtKB-UniRule"/>
</dbReference>
<dbReference type="GO" id="GO:0008360">
    <property type="term" value="P:regulation of cell shape"/>
    <property type="evidence" value="ECO:0007669"/>
    <property type="project" value="UniProtKB-KW"/>
</dbReference>
<dbReference type="FunFam" id="3.40.1190.10:FF:000001">
    <property type="entry name" value="UDP-N-acetylmuramate--L-alanine ligase"/>
    <property type="match status" value="1"/>
</dbReference>
<dbReference type="Gene3D" id="3.90.190.20">
    <property type="entry name" value="Mur ligase, C-terminal domain"/>
    <property type="match status" value="1"/>
</dbReference>
<dbReference type="Gene3D" id="3.40.1190.10">
    <property type="entry name" value="Mur-like, catalytic domain"/>
    <property type="match status" value="1"/>
</dbReference>
<dbReference type="Gene3D" id="3.40.50.720">
    <property type="entry name" value="NAD(P)-binding Rossmann-like Domain"/>
    <property type="match status" value="1"/>
</dbReference>
<dbReference type="HAMAP" id="MF_00046">
    <property type="entry name" value="MurC"/>
    <property type="match status" value="1"/>
</dbReference>
<dbReference type="InterPro" id="IPR036565">
    <property type="entry name" value="Mur-like_cat_sf"/>
</dbReference>
<dbReference type="InterPro" id="IPR004101">
    <property type="entry name" value="Mur_ligase_C"/>
</dbReference>
<dbReference type="InterPro" id="IPR036615">
    <property type="entry name" value="Mur_ligase_C_dom_sf"/>
</dbReference>
<dbReference type="InterPro" id="IPR013221">
    <property type="entry name" value="Mur_ligase_cen"/>
</dbReference>
<dbReference type="InterPro" id="IPR000713">
    <property type="entry name" value="Mur_ligase_N"/>
</dbReference>
<dbReference type="InterPro" id="IPR050061">
    <property type="entry name" value="MurCDEF_pg_biosynth"/>
</dbReference>
<dbReference type="InterPro" id="IPR005758">
    <property type="entry name" value="UDP-N-AcMur_Ala_ligase_MurC"/>
</dbReference>
<dbReference type="NCBIfam" id="TIGR01082">
    <property type="entry name" value="murC"/>
    <property type="match status" value="1"/>
</dbReference>
<dbReference type="PANTHER" id="PTHR43445:SF3">
    <property type="entry name" value="UDP-N-ACETYLMURAMATE--L-ALANINE LIGASE"/>
    <property type="match status" value="1"/>
</dbReference>
<dbReference type="PANTHER" id="PTHR43445">
    <property type="entry name" value="UDP-N-ACETYLMURAMATE--L-ALANINE LIGASE-RELATED"/>
    <property type="match status" value="1"/>
</dbReference>
<dbReference type="Pfam" id="PF01225">
    <property type="entry name" value="Mur_ligase"/>
    <property type="match status" value="1"/>
</dbReference>
<dbReference type="Pfam" id="PF02875">
    <property type="entry name" value="Mur_ligase_C"/>
    <property type="match status" value="1"/>
</dbReference>
<dbReference type="Pfam" id="PF08245">
    <property type="entry name" value="Mur_ligase_M"/>
    <property type="match status" value="1"/>
</dbReference>
<dbReference type="SUPFAM" id="SSF51984">
    <property type="entry name" value="MurCD N-terminal domain"/>
    <property type="match status" value="1"/>
</dbReference>
<dbReference type="SUPFAM" id="SSF53623">
    <property type="entry name" value="MurD-like peptide ligases, catalytic domain"/>
    <property type="match status" value="1"/>
</dbReference>
<dbReference type="SUPFAM" id="SSF53244">
    <property type="entry name" value="MurD-like peptide ligases, peptide-binding domain"/>
    <property type="match status" value="1"/>
</dbReference>
<proteinExistence type="inferred from homology"/>
<feature type="chain" id="PRO_1000091097" description="UDP-N-acetylmuramate--L-alanine ligase">
    <location>
        <begin position="1"/>
        <end position="477"/>
    </location>
</feature>
<feature type="binding site" evidence="1">
    <location>
        <begin position="112"/>
        <end position="118"/>
    </location>
    <ligand>
        <name>ATP</name>
        <dbReference type="ChEBI" id="CHEBI:30616"/>
    </ligand>
</feature>